<reference key="1">
    <citation type="journal article" date="2006" name="J. Bacteriol.">
        <title>The Methanosarcina barkeri genome: comparative analysis with Methanosarcina acetivorans and Methanosarcina mazei reveals extensive rearrangement within methanosarcinal genomes.</title>
        <authorList>
            <person name="Maeder D.L."/>
            <person name="Anderson I."/>
            <person name="Brettin T.S."/>
            <person name="Bruce D.C."/>
            <person name="Gilna P."/>
            <person name="Han C.S."/>
            <person name="Lapidus A."/>
            <person name="Metcalf W.W."/>
            <person name="Saunders E."/>
            <person name="Tapia R."/>
            <person name="Sowers K.R."/>
        </authorList>
    </citation>
    <scope>NUCLEOTIDE SEQUENCE [LARGE SCALE GENOMIC DNA]</scope>
    <source>
        <strain>Fusaro / DSM 804</strain>
    </source>
</reference>
<comment type="function">
    <text evidence="1">Involved in the biosynthesis of the chorismate, which leads to the biosynthesis of aromatic amino acids. Catalyzes the reversible NADPH linked reduction of 3-dehydroshikimate (DHSA) to yield shikimate (SA).</text>
</comment>
<comment type="catalytic activity">
    <reaction evidence="1">
        <text>shikimate + NADP(+) = 3-dehydroshikimate + NADPH + H(+)</text>
        <dbReference type="Rhea" id="RHEA:17737"/>
        <dbReference type="ChEBI" id="CHEBI:15378"/>
        <dbReference type="ChEBI" id="CHEBI:16630"/>
        <dbReference type="ChEBI" id="CHEBI:36208"/>
        <dbReference type="ChEBI" id="CHEBI:57783"/>
        <dbReference type="ChEBI" id="CHEBI:58349"/>
        <dbReference type="EC" id="1.1.1.25"/>
    </reaction>
</comment>
<comment type="pathway">
    <text evidence="1">Metabolic intermediate biosynthesis; chorismate biosynthesis; chorismate from D-erythrose 4-phosphate and phosphoenolpyruvate: step 4/7.</text>
</comment>
<comment type="subunit">
    <text evidence="1">Homodimer.</text>
</comment>
<comment type="similarity">
    <text evidence="1">Belongs to the shikimate dehydrogenase family.</text>
</comment>
<protein>
    <recommendedName>
        <fullName evidence="1">Shikimate dehydrogenase (NADP(+))</fullName>
        <shortName evidence="1">SDH</shortName>
        <ecNumber evidence="1">1.1.1.25</ecNumber>
    </recommendedName>
</protein>
<accession>Q46DZ6</accession>
<proteinExistence type="inferred from homology"/>
<evidence type="ECO:0000255" key="1">
    <source>
        <dbReference type="HAMAP-Rule" id="MF_00222"/>
    </source>
</evidence>
<dbReference type="EC" id="1.1.1.25" evidence="1"/>
<dbReference type="EMBL" id="CP000099">
    <property type="protein sequence ID" value="AAZ69896.1"/>
    <property type="molecule type" value="Genomic_DNA"/>
</dbReference>
<dbReference type="SMR" id="Q46DZ6"/>
<dbReference type="STRING" id="269797.Mbar_A0923"/>
<dbReference type="PaxDb" id="269797-Mbar_A0923"/>
<dbReference type="KEGG" id="mba:Mbar_A0923"/>
<dbReference type="eggNOG" id="arCOG01033">
    <property type="taxonomic scope" value="Archaea"/>
</dbReference>
<dbReference type="HOGENOM" id="CLU_044063_4_1_2"/>
<dbReference type="OrthoDB" id="8744at2157"/>
<dbReference type="UniPathway" id="UPA00053">
    <property type="reaction ID" value="UER00087"/>
</dbReference>
<dbReference type="GO" id="GO:0050661">
    <property type="term" value="F:NADP binding"/>
    <property type="evidence" value="ECO:0007669"/>
    <property type="project" value="InterPro"/>
</dbReference>
<dbReference type="GO" id="GO:0004764">
    <property type="term" value="F:shikimate 3-dehydrogenase (NADP+) activity"/>
    <property type="evidence" value="ECO:0007669"/>
    <property type="project" value="UniProtKB-UniRule"/>
</dbReference>
<dbReference type="GO" id="GO:0008652">
    <property type="term" value="P:amino acid biosynthetic process"/>
    <property type="evidence" value="ECO:0007669"/>
    <property type="project" value="UniProtKB-KW"/>
</dbReference>
<dbReference type="GO" id="GO:0009073">
    <property type="term" value="P:aromatic amino acid family biosynthetic process"/>
    <property type="evidence" value="ECO:0007669"/>
    <property type="project" value="UniProtKB-KW"/>
</dbReference>
<dbReference type="GO" id="GO:0009423">
    <property type="term" value="P:chorismate biosynthetic process"/>
    <property type="evidence" value="ECO:0007669"/>
    <property type="project" value="UniProtKB-UniRule"/>
</dbReference>
<dbReference type="GO" id="GO:0019632">
    <property type="term" value="P:shikimate metabolic process"/>
    <property type="evidence" value="ECO:0007669"/>
    <property type="project" value="InterPro"/>
</dbReference>
<dbReference type="CDD" id="cd01065">
    <property type="entry name" value="NAD_bind_Shikimate_DH"/>
    <property type="match status" value="1"/>
</dbReference>
<dbReference type="FunFam" id="3.40.50.720:FF:000086">
    <property type="entry name" value="Quinate/shikimate dehydrogenase"/>
    <property type="match status" value="1"/>
</dbReference>
<dbReference type="Gene3D" id="3.40.50.10860">
    <property type="entry name" value="Leucine Dehydrogenase, chain A, domain 1"/>
    <property type="match status" value="1"/>
</dbReference>
<dbReference type="Gene3D" id="3.40.50.720">
    <property type="entry name" value="NAD(P)-binding Rossmann-like Domain"/>
    <property type="match status" value="1"/>
</dbReference>
<dbReference type="HAMAP" id="MF_00222">
    <property type="entry name" value="Shikimate_DH_AroE"/>
    <property type="match status" value="1"/>
</dbReference>
<dbReference type="InterPro" id="IPR046346">
    <property type="entry name" value="Aminoacid_DH-like_N_sf"/>
</dbReference>
<dbReference type="InterPro" id="IPR036291">
    <property type="entry name" value="NAD(P)-bd_dom_sf"/>
</dbReference>
<dbReference type="InterPro" id="IPR041121">
    <property type="entry name" value="SDH_C"/>
</dbReference>
<dbReference type="InterPro" id="IPR011342">
    <property type="entry name" value="Shikimate_DH"/>
</dbReference>
<dbReference type="InterPro" id="IPR013708">
    <property type="entry name" value="Shikimate_DH-bd_N"/>
</dbReference>
<dbReference type="InterPro" id="IPR022893">
    <property type="entry name" value="Shikimate_DH_fam"/>
</dbReference>
<dbReference type="InterPro" id="IPR006151">
    <property type="entry name" value="Shikm_DH/Glu-tRNA_Rdtase"/>
</dbReference>
<dbReference type="NCBIfam" id="TIGR00507">
    <property type="entry name" value="aroE"/>
    <property type="match status" value="1"/>
</dbReference>
<dbReference type="NCBIfam" id="NF001319">
    <property type="entry name" value="PRK00258.3-3"/>
    <property type="match status" value="1"/>
</dbReference>
<dbReference type="PANTHER" id="PTHR21089:SF1">
    <property type="entry name" value="BIFUNCTIONAL 3-DEHYDROQUINATE DEHYDRATASE_SHIKIMATE DEHYDROGENASE, CHLOROPLASTIC"/>
    <property type="match status" value="1"/>
</dbReference>
<dbReference type="PANTHER" id="PTHR21089">
    <property type="entry name" value="SHIKIMATE DEHYDROGENASE"/>
    <property type="match status" value="1"/>
</dbReference>
<dbReference type="Pfam" id="PF18317">
    <property type="entry name" value="SDH_C"/>
    <property type="match status" value="1"/>
</dbReference>
<dbReference type="Pfam" id="PF01488">
    <property type="entry name" value="Shikimate_DH"/>
    <property type="match status" value="1"/>
</dbReference>
<dbReference type="Pfam" id="PF08501">
    <property type="entry name" value="Shikimate_dh_N"/>
    <property type="match status" value="1"/>
</dbReference>
<dbReference type="SUPFAM" id="SSF53223">
    <property type="entry name" value="Aminoacid dehydrogenase-like, N-terminal domain"/>
    <property type="match status" value="1"/>
</dbReference>
<dbReference type="SUPFAM" id="SSF51735">
    <property type="entry name" value="NAD(P)-binding Rossmann-fold domains"/>
    <property type="match status" value="1"/>
</dbReference>
<organism>
    <name type="scientific">Methanosarcina barkeri (strain Fusaro / DSM 804)</name>
    <dbReference type="NCBI Taxonomy" id="269797"/>
    <lineage>
        <taxon>Archaea</taxon>
        <taxon>Methanobacteriati</taxon>
        <taxon>Methanobacteriota</taxon>
        <taxon>Stenosarchaea group</taxon>
        <taxon>Methanomicrobia</taxon>
        <taxon>Methanosarcinales</taxon>
        <taxon>Methanosarcinaceae</taxon>
        <taxon>Methanosarcina</taxon>
    </lineage>
</organism>
<feature type="chain" id="PRO_1000021301" description="Shikimate dehydrogenase (NADP(+))">
    <location>
        <begin position="1"/>
        <end position="280"/>
    </location>
</feature>
<feature type="active site" description="Proton acceptor" evidence="1">
    <location>
        <position position="66"/>
    </location>
</feature>
<feature type="binding site" evidence="1">
    <location>
        <begin position="15"/>
        <end position="17"/>
    </location>
    <ligand>
        <name>shikimate</name>
        <dbReference type="ChEBI" id="CHEBI:36208"/>
    </ligand>
</feature>
<feature type="binding site" evidence="1">
    <location>
        <position position="62"/>
    </location>
    <ligand>
        <name>shikimate</name>
        <dbReference type="ChEBI" id="CHEBI:36208"/>
    </ligand>
</feature>
<feature type="binding site" evidence="1">
    <location>
        <position position="88"/>
    </location>
    <ligand>
        <name>shikimate</name>
        <dbReference type="ChEBI" id="CHEBI:36208"/>
    </ligand>
</feature>
<feature type="binding site" evidence="1">
    <location>
        <position position="104"/>
    </location>
    <ligand>
        <name>shikimate</name>
        <dbReference type="ChEBI" id="CHEBI:36208"/>
    </ligand>
</feature>
<feature type="binding site" evidence="1">
    <location>
        <begin position="128"/>
        <end position="132"/>
    </location>
    <ligand>
        <name>NADP(+)</name>
        <dbReference type="ChEBI" id="CHEBI:58349"/>
    </ligand>
</feature>
<feature type="binding site" evidence="1">
    <location>
        <begin position="151"/>
        <end position="156"/>
    </location>
    <ligand>
        <name>NADP(+)</name>
        <dbReference type="ChEBI" id="CHEBI:58349"/>
    </ligand>
</feature>
<feature type="binding site" evidence="1">
    <location>
        <position position="222"/>
    </location>
    <ligand>
        <name>NADP(+)</name>
        <dbReference type="ChEBI" id="CHEBI:58349"/>
    </ligand>
</feature>
<feature type="binding site" evidence="1">
    <location>
        <position position="224"/>
    </location>
    <ligand>
        <name>shikimate</name>
        <dbReference type="ChEBI" id="CHEBI:36208"/>
    </ligand>
</feature>
<feature type="binding site" evidence="1">
    <location>
        <position position="245"/>
    </location>
    <ligand>
        <name>NADP(+)</name>
        <dbReference type="ChEBI" id="CHEBI:58349"/>
    </ligand>
</feature>
<gene>
    <name evidence="1" type="primary">aroE</name>
    <name type="ordered locus">Mbar_A0923</name>
</gene>
<name>AROE_METBF</name>
<sequence>MKQVFGVFGDPIAHSLSPAMHNAAFSALGMDCIYHAFRVKPEKLEKAILGAEAMGFGGLNLTVPLKETALKLDCIKPDPLAEKIGAVNTIVFGETGEIKGYNTDGLGAKQALQNSAVEMEGSKIVVTGAGGAARSIAFQLAADGAEITIVNRTEGRAIELAKDISAASLSGNVTGKGLSGLKNLLQDANILINTTTLGMHPNVDTAIATAEDLHPDLTVFDIVYNPLETRLLREAKASGAKTVSGVLMLVYQGAEAFKLWTGIEPPVELMKKTVLEALQV</sequence>
<keyword id="KW-0028">Amino-acid biosynthesis</keyword>
<keyword id="KW-0057">Aromatic amino acid biosynthesis</keyword>
<keyword id="KW-0521">NADP</keyword>
<keyword id="KW-0560">Oxidoreductase</keyword>